<organism>
    <name type="scientific">Treponema pallidum subsp. pallidum (strain SS14)</name>
    <dbReference type="NCBI Taxonomy" id="455434"/>
    <lineage>
        <taxon>Bacteria</taxon>
        <taxon>Pseudomonadati</taxon>
        <taxon>Spirochaetota</taxon>
        <taxon>Spirochaetia</taxon>
        <taxon>Spirochaetales</taxon>
        <taxon>Treponemataceae</taxon>
        <taxon>Treponema</taxon>
    </lineage>
</organism>
<gene>
    <name evidence="1" type="primary">rpmJ</name>
    <name type="ordered locus">TPASS_0209</name>
</gene>
<dbReference type="EMBL" id="CP000805">
    <property type="protein sequence ID" value="ACD70636.1"/>
    <property type="molecule type" value="Genomic_DNA"/>
</dbReference>
<dbReference type="RefSeq" id="WP_010881657.1">
    <property type="nucleotide sequence ID" value="NC_021508.1"/>
</dbReference>
<dbReference type="SMR" id="B2S2F7"/>
<dbReference type="GeneID" id="93875997"/>
<dbReference type="KEGG" id="tpp:TPASS_0209"/>
<dbReference type="Proteomes" id="UP000001202">
    <property type="component" value="Chromosome"/>
</dbReference>
<dbReference type="GO" id="GO:0005737">
    <property type="term" value="C:cytoplasm"/>
    <property type="evidence" value="ECO:0007669"/>
    <property type="project" value="UniProtKB-ARBA"/>
</dbReference>
<dbReference type="GO" id="GO:1990904">
    <property type="term" value="C:ribonucleoprotein complex"/>
    <property type="evidence" value="ECO:0007669"/>
    <property type="project" value="UniProtKB-KW"/>
</dbReference>
<dbReference type="GO" id="GO:0005840">
    <property type="term" value="C:ribosome"/>
    <property type="evidence" value="ECO:0007669"/>
    <property type="project" value="UniProtKB-KW"/>
</dbReference>
<dbReference type="GO" id="GO:0003735">
    <property type="term" value="F:structural constituent of ribosome"/>
    <property type="evidence" value="ECO:0007669"/>
    <property type="project" value="InterPro"/>
</dbReference>
<dbReference type="GO" id="GO:0006412">
    <property type="term" value="P:translation"/>
    <property type="evidence" value="ECO:0007669"/>
    <property type="project" value="UniProtKB-UniRule"/>
</dbReference>
<dbReference type="HAMAP" id="MF_00251">
    <property type="entry name" value="Ribosomal_bL36"/>
    <property type="match status" value="1"/>
</dbReference>
<dbReference type="InterPro" id="IPR000473">
    <property type="entry name" value="Ribosomal_bL36"/>
</dbReference>
<dbReference type="InterPro" id="IPR035977">
    <property type="entry name" value="Ribosomal_bL36_sp"/>
</dbReference>
<dbReference type="NCBIfam" id="TIGR01022">
    <property type="entry name" value="rpmJ_bact"/>
    <property type="match status" value="1"/>
</dbReference>
<dbReference type="PANTHER" id="PTHR42888">
    <property type="entry name" value="50S RIBOSOMAL PROTEIN L36, CHLOROPLASTIC"/>
    <property type="match status" value="1"/>
</dbReference>
<dbReference type="PANTHER" id="PTHR42888:SF1">
    <property type="entry name" value="LARGE RIBOSOMAL SUBUNIT PROTEIN BL36C"/>
    <property type="match status" value="1"/>
</dbReference>
<dbReference type="Pfam" id="PF00444">
    <property type="entry name" value="Ribosomal_L36"/>
    <property type="match status" value="1"/>
</dbReference>
<dbReference type="SUPFAM" id="SSF57840">
    <property type="entry name" value="Ribosomal protein L36"/>
    <property type="match status" value="1"/>
</dbReference>
<dbReference type="PROSITE" id="PS00828">
    <property type="entry name" value="RIBOSOMAL_L36"/>
    <property type="match status" value="1"/>
</dbReference>
<sequence>MKIRTSVKVICDKCKLIKRFGIIRVICVNPKHKQRQG</sequence>
<protein>
    <recommendedName>
        <fullName evidence="1">Large ribosomal subunit protein bL36</fullName>
    </recommendedName>
    <alternativeName>
        <fullName evidence="2">50S ribosomal protein L36</fullName>
    </alternativeName>
</protein>
<feature type="chain" id="PRO_1000101079" description="Large ribosomal subunit protein bL36">
    <location>
        <begin position="1"/>
        <end position="37"/>
    </location>
</feature>
<evidence type="ECO:0000255" key="1">
    <source>
        <dbReference type="HAMAP-Rule" id="MF_00251"/>
    </source>
</evidence>
<evidence type="ECO:0000305" key="2"/>
<proteinExistence type="inferred from homology"/>
<comment type="similarity">
    <text evidence="1">Belongs to the bacterial ribosomal protein bL36 family.</text>
</comment>
<keyword id="KW-0687">Ribonucleoprotein</keyword>
<keyword id="KW-0689">Ribosomal protein</keyword>
<reference key="1">
    <citation type="journal article" date="2008" name="BMC Microbiol.">
        <title>Complete genome sequence of Treponema pallidum ssp. pallidum strain SS14 determined with oligonucleotide arrays.</title>
        <authorList>
            <person name="Matejkova P."/>
            <person name="Strouhal M."/>
            <person name="Smajs D."/>
            <person name="Norris S.J."/>
            <person name="Palzkill T."/>
            <person name="Petrosino J.F."/>
            <person name="Sodergren E."/>
            <person name="Norton J.E."/>
            <person name="Singh J."/>
            <person name="Richmond T.A."/>
            <person name="Molla M.N."/>
            <person name="Albert T.J."/>
            <person name="Weinstock G.M."/>
        </authorList>
    </citation>
    <scope>NUCLEOTIDE SEQUENCE [LARGE SCALE GENOMIC DNA]</scope>
    <source>
        <strain>SS14</strain>
    </source>
</reference>
<accession>B2S2F7</accession>
<name>RL36_TREPS</name>